<gene>
    <name type="ordered locus">At3g07850</name>
    <name type="ORF">F17A17.19</name>
</gene>
<organism>
    <name type="scientific">Arabidopsis thaliana</name>
    <name type="common">Mouse-ear cress</name>
    <dbReference type="NCBI Taxonomy" id="3702"/>
    <lineage>
        <taxon>Eukaryota</taxon>
        <taxon>Viridiplantae</taxon>
        <taxon>Streptophyta</taxon>
        <taxon>Embryophyta</taxon>
        <taxon>Tracheophyta</taxon>
        <taxon>Spermatophyta</taxon>
        <taxon>Magnoliopsida</taxon>
        <taxon>eudicotyledons</taxon>
        <taxon>Gunneridae</taxon>
        <taxon>Pentapetalae</taxon>
        <taxon>rosids</taxon>
        <taxon>malvids</taxon>
        <taxon>Brassicales</taxon>
        <taxon>Brassicaceae</taxon>
        <taxon>Camelineae</taxon>
        <taxon>Arabidopsis</taxon>
    </lineage>
</organism>
<name>PGLR2_ARATH</name>
<feature type="signal peptide" evidence="2">
    <location>
        <begin position="1"/>
        <end position="23"/>
    </location>
</feature>
<feature type="chain" id="PRO_0000024800" description="Exopolygalacturonase clone GBGA483">
    <location>
        <begin position="24"/>
        <end position="444"/>
    </location>
</feature>
<feature type="repeat" description="PbH1 1" evidence="2">
    <location>
        <begin position="220"/>
        <end position="246"/>
    </location>
</feature>
<feature type="repeat" description="PbH1 2" evidence="2">
    <location>
        <begin position="247"/>
        <end position="268"/>
    </location>
</feature>
<feature type="repeat" description="PbH1 3" evidence="2">
    <location>
        <begin position="270"/>
        <end position="290"/>
    </location>
</feature>
<feature type="repeat" description="PbH1 4" evidence="2">
    <location>
        <begin position="300"/>
        <end position="321"/>
    </location>
</feature>
<feature type="repeat" description="PbH1 5" evidence="2">
    <location>
        <begin position="330"/>
        <end position="351"/>
    </location>
</feature>
<feature type="active site" description="Proton donor" evidence="1">
    <location>
        <position position="261"/>
    </location>
</feature>
<feature type="active site" evidence="4">
    <location>
        <position position="284"/>
    </location>
</feature>
<feature type="glycosylation site" description="N-linked (GlcNAc...) asparagine" evidence="3">
    <location>
        <position position="222"/>
    </location>
</feature>
<feature type="glycosylation site" description="N-linked (GlcNAc...) asparagine" evidence="3">
    <location>
        <position position="342"/>
    </location>
</feature>
<feature type="disulfide bond" evidence="1">
    <location>
        <begin position="263"/>
        <end position="280"/>
    </location>
</feature>
<feature type="disulfide bond" evidence="1">
    <location>
        <begin position="391"/>
        <end position="397"/>
    </location>
</feature>
<feature type="disulfide bond" evidence="1">
    <location>
        <begin position="420"/>
        <end position="436"/>
    </location>
</feature>
<feature type="sequence conflict" description="In Ref. 1; CAA51033." evidence="5" ref="1">
    <original>S</original>
    <variation>G</variation>
    <location>
        <position position="81"/>
    </location>
</feature>
<keyword id="KW-0134">Cell wall</keyword>
<keyword id="KW-0961">Cell wall biogenesis/degradation</keyword>
<keyword id="KW-1015">Disulfide bond</keyword>
<keyword id="KW-0325">Glycoprotein</keyword>
<keyword id="KW-0326">Glycosidase</keyword>
<keyword id="KW-0378">Hydrolase</keyword>
<keyword id="KW-1185">Reference proteome</keyword>
<keyword id="KW-0677">Repeat</keyword>
<keyword id="KW-0964">Secreted</keyword>
<keyword id="KW-0732">Signal</keyword>
<protein>
    <recommendedName>
        <fullName>Exopolygalacturonase clone GBGA483</fullName>
        <shortName>ExoPG</shortName>
        <ecNumber>3.2.1.67</ecNumber>
    </recommendedName>
    <alternativeName>
        <fullName>Galacturan 1,4-alpha-galacturonidase</fullName>
    </alternativeName>
    <alternativeName>
        <fullName>Pectinase</fullName>
    </alternativeName>
</protein>
<sequence length="444" mass="45600">MVGSHKASGVLLVLLVVMATTIANGTPVVDKAKNAATAVEDTAKNAATAVGGAAASVGAKVSGAKPGAAVDVKASGAKGDSKTDDSAAFAAAWKEACAAGSTITVPKGEYMVESLEFKGPCKGPVTLELNGNFKAPATVKTTKPHAGWIDFENIADFTLNGNKAIFDGQGSLAWKANDCAKTGKCNSLPINIRFTGLTNSKINSITSTNSKLFHMNILNCKNITLSDIGIDAPPESLNTDGIHIGRSNGVNLIGAKIKTGDDCVSIGDGTENLIVENVECGPGHGISIGSLGRYPNEQPVKGVTVRKCLIKNTDNGVRIKTWPGSPPGIASNILFEDITMDNVSLPVLIDQEYCPYGHCKAGVPSQVKLSDVTIKGIKGTSATKVAVKLMCSKGVPCTNIALSDINLVHNGKEGPAVSACSNIKPILSGKLVPAACTEVAKPGP</sequence>
<comment type="function">
    <text>May function in depolymerizing pectin during pollen development, germination, and tube growth. Acts as an exo-polygalacturonase.</text>
</comment>
<comment type="catalytic activity">
    <reaction>
        <text>[(1-&gt;4)-alpha-D-galacturonosyl](n) + H2O = alpha-D-galacturonate + [(1-&gt;4)-alpha-D-galacturonosyl](n-1)</text>
        <dbReference type="Rhea" id="RHEA:14117"/>
        <dbReference type="Rhea" id="RHEA-COMP:14570"/>
        <dbReference type="Rhea" id="RHEA-COMP:14572"/>
        <dbReference type="ChEBI" id="CHEBI:15377"/>
        <dbReference type="ChEBI" id="CHEBI:58658"/>
        <dbReference type="ChEBI" id="CHEBI:140523"/>
        <dbReference type="EC" id="3.2.1.67"/>
    </reaction>
</comment>
<comment type="subcellular location">
    <subcellularLocation>
        <location>Secreted</location>
    </subcellularLocation>
    <subcellularLocation>
        <location>Secreted</location>
        <location>Cell wall</location>
    </subcellularLocation>
</comment>
<comment type="similarity">
    <text evidence="5">Belongs to the glycosyl hydrolase 28 family.</text>
</comment>
<proteinExistence type="evidence at transcript level"/>
<accession>P49063</accession>
<accession>Q9SFC9</accession>
<reference key="1">
    <citation type="journal article" date="1999" name="Mol. Gen. Genet.">
        <title>Differential expression of a polygalacturonase gene family in Arabidopsis thaliana.</title>
        <authorList>
            <person name="Torki M."/>
            <person name="Mandaron P."/>
            <person name="Thomas F."/>
            <person name="Quigley F."/>
            <person name="Mache R."/>
            <person name="Falconet D."/>
        </authorList>
    </citation>
    <scope>NUCLEOTIDE SEQUENCE [MRNA]</scope>
    <source>
        <strain>cv. C24</strain>
        <tissue>Flower bud</tissue>
    </source>
</reference>
<reference key="2">
    <citation type="journal article" date="2000" name="Nature">
        <title>Sequence and analysis of chromosome 3 of the plant Arabidopsis thaliana.</title>
        <authorList>
            <person name="Salanoubat M."/>
            <person name="Lemcke K."/>
            <person name="Rieger M."/>
            <person name="Ansorge W."/>
            <person name="Unseld M."/>
            <person name="Fartmann B."/>
            <person name="Valle G."/>
            <person name="Bloecker H."/>
            <person name="Perez-Alonso M."/>
            <person name="Obermaier B."/>
            <person name="Delseny M."/>
            <person name="Boutry M."/>
            <person name="Grivell L.A."/>
            <person name="Mache R."/>
            <person name="Puigdomenech P."/>
            <person name="De Simone V."/>
            <person name="Choisne N."/>
            <person name="Artiguenave F."/>
            <person name="Robert C."/>
            <person name="Brottier P."/>
            <person name="Wincker P."/>
            <person name="Cattolico L."/>
            <person name="Weissenbach J."/>
            <person name="Saurin W."/>
            <person name="Quetier F."/>
            <person name="Schaefer M."/>
            <person name="Mueller-Auer S."/>
            <person name="Gabel C."/>
            <person name="Fuchs M."/>
            <person name="Benes V."/>
            <person name="Wurmbach E."/>
            <person name="Drzonek H."/>
            <person name="Erfle H."/>
            <person name="Jordan N."/>
            <person name="Bangert S."/>
            <person name="Wiedelmann R."/>
            <person name="Kranz H."/>
            <person name="Voss H."/>
            <person name="Holland R."/>
            <person name="Brandt P."/>
            <person name="Nyakatura G."/>
            <person name="Vezzi A."/>
            <person name="D'Angelo M."/>
            <person name="Pallavicini A."/>
            <person name="Toppo S."/>
            <person name="Simionati B."/>
            <person name="Conrad A."/>
            <person name="Hornischer K."/>
            <person name="Kauer G."/>
            <person name="Loehnert T.-H."/>
            <person name="Nordsiek G."/>
            <person name="Reichelt J."/>
            <person name="Scharfe M."/>
            <person name="Schoen O."/>
            <person name="Bargues M."/>
            <person name="Terol J."/>
            <person name="Climent J."/>
            <person name="Navarro P."/>
            <person name="Collado C."/>
            <person name="Perez-Perez A."/>
            <person name="Ottenwaelder B."/>
            <person name="Duchemin D."/>
            <person name="Cooke R."/>
            <person name="Laudie M."/>
            <person name="Berger-Llauro C."/>
            <person name="Purnelle B."/>
            <person name="Masuy D."/>
            <person name="de Haan M."/>
            <person name="Maarse A.C."/>
            <person name="Alcaraz J.-P."/>
            <person name="Cottet A."/>
            <person name="Casacuberta E."/>
            <person name="Monfort A."/>
            <person name="Argiriou A."/>
            <person name="Flores M."/>
            <person name="Liguori R."/>
            <person name="Vitale D."/>
            <person name="Mannhaupt G."/>
            <person name="Haase D."/>
            <person name="Schoof H."/>
            <person name="Rudd S."/>
            <person name="Zaccaria P."/>
            <person name="Mewes H.-W."/>
            <person name="Mayer K.F.X."/>
            <person name="Kaul S."/>
            <person name="Town C.D."/>
            <person name="Koo H.L."/>
            <person name="Tallon L.J."/>
            <person name="Jenkins J."/>
            <person name="Rooney T."/>
            <person name="Rizzo M."/>
            <person name="Walts A."/>
            <person name="Utterback T."/>
            <person name="Fujii C.Y."/>
            <person name="Shea T.P."/>
            <person name="Creasy T.H."/>
            <person name="Haas B."/>
            <person name="Maiti R."/>
            <person name="Wu D."/>
            <person name="Peterson J."/>
            <person name="Van Aken S."/>
            <person name="Pai G."/>
            <person name="Militscher J."/>
            <person name="Sellers P."/>
            <person name="Gill J.E."/>
            <person name="Feldblyum T.V."/>
            <person name="Preuss D."/>
            <person name="Lin X."/>
            <person name="Nierman W.C."/>
            <person name="Salzberg S.L."/>
            <person name="White O."/>
            <person name="Venter J.C."/>
            <person name="Fraser C.M."/>
            <person name="Kaneko T."/>
            <person name="Nakamura Y."/>
            <person name="Sato S."/>
            <person name="Kato T."/>
            <person name="Asamizu E."/>
            <person name="Sasamoto S."/>
            <person name="Kimura T."/>
            <person name="Idesawa K."/>
            <person name="Kawashima K."/>
            <person name="Kishida Y."/>
            <person name="Kiyokawa C."/>
            <person name="Kohara M."/>
            <person name="Matsumoto M."/>
            <person name="Matsuno A."/>
            <person name="Muraki A."/>
            <person name="Nakayama S."/>
            <person name="Nakazaki N."/>
            <person name="Shinpo S."/>
            <person name="Takeuchi C."/>
            <person name="Wada T."/>
            <person name="Watanabe A."/>
            <person name="Yamada M."/>
            <person name="Yasuda M."/>
            <person name="Tabata S."/>
        </authorList>
    </citation>
    <scope>NUCLEOTIDE SEQUENCE [LARGE SCALE GENOMIC DNA]</scope>
    <source>
        <strain>cv. Columbia</strain>
    </source>
</reference>
<reference key="3">
    <citation type="journal article" date="2017" name="Plant J.">
        <title>Araport11: a complete reannotation of the Arabidopsis thaliana reference genome.</title>
        <authorList>
            <person name="Cheng C.Y."/>
            <person name="Krishnakumar V."/>
            <person name="Chan A.P."/>
            <person name="Thibaud-Nissen F."/>
            <person name="Schobel S."/>
            <person name="Town C.D."/>
        </authorList>
    </citation>
    <scope>GENOME REANNOTATION</scope>
    <source>
        <strain>cv. Columbia</strain>
    </source>
</reference>
<reference key="4">
    <citation type="journal article" date="2003" name="Science">
        <title>Empirical analysis of transcriptional activity in the Arabidopsis genome.</title>
        <authorList>
            <person name="Yamada K."/>
            <person name="Lim J."/>
            <person name="Dale J.M."/>
            <person name="Chen H."/>
            <person name="Shinn P."/>
            <person name="Palm C.J."/>
            <person name="Southwick A.M."/>
            <person name="Wu H.C."/>
            <person name="Kim C.J."/>
            <person name="Nguyen M."/>
            <person name="Pham P.K."/>
            <person name="Cheuk R.F."/>
            <person name="Karlin-Newmann G."/>
            <person name="Liu S.X."/>
            <person name="Lam B."/>
            <person name="Sakano H."/>
            <person name="Wu T."/>
            <person name="Yu G."/>
            <person name="Miranda M."/>
            <person name="Quach H.L."/>
            <person name="Tripp M."/>
            <person name="Chang C.H."/>
            <person name="Lee J.M."/>
            <person name="Toriumi M.J."/>
            <person name="Chan M.M."/>
            <person name="Tang C.C."/>
            <person name="Onodera C.S."/>
            <person name="Deng J.M."/>
            <person name="Akiyama K."/>
            <person name="Ansari Y."/>
            <person name="Arakawa T."/>
            <person name="Banh J."/>
            <person name="Banno F."/>
            <person name="Bowser L."/>
            <person name="Brooks S.Y."/>
            <person name="Carninci P."/>
            <person name="Chao Q."/>
            <person name="Choy N."/>
            <person name="Enju A."/>
            <person name="Goldsmith A.D."/>
            <person name="Gurjal M."/>
            <person name="Hansen N.F."/>
            <person name="Hayashizaki Y."/>
            <person name="Johnson-Hopson C."/>
            <person name="Hsuan V.W."/>
            <person name="Iida K."/>
            <person name="Karnes M."/>
            <person name="Khan S."/>
            <person name="Koesema E."/>
            <person name="Ishida J."/>
            <person name="Jiang P.X."/>
            <person name="Jones T."/>
            <person name="Kawai J."/>
            <person name="Kamiya A."/>
            <person name="Meyers C."/>
            <person name="Nakajima M."/>
            <person name="Narusaka M."/>
            <person name="Seki M."/>
            <person name="Sakurai T."/>
            <person name="Satou M."/>
            <person name="Tamse R."/>
            <person name="Vaysberg M."/>
            <person name="Wallender E.K."/>
            <person name="Wong C."/>
            <person name="Yamamura Y."/>
            <person name="Yuan S."/>
            <person name="Shinozaki K."/>
            <person name="Davis R.W."/>
            <person name="Theologis A."/>
            <person name="Ecker J.R."/>
        </authorList>
    </citation>
    <scope>NUCLEOTIDE SEQUENCE [LARGE SCALE MRNA]</scope>
    <source>
        <strain>cv. Columbia</strain>
    </source>
</reference>
<evidence type="ECO:0000250" key="1">
    <source>
        <dbReference type="UniProtKB" id="O74213"/>
    </source>
</evidence>
<evidence type="ECO:0000255" key="2"/>
<evidence type="ECO:0000255" key="3">
    <source>
        <dbReference type="PROSITE-ProRule" id="PRU00498"/>
    </source>
</evidence>
<evidence type="ECO:0000255" key="4">
    <source>
        <dbReference type="PROSITE-ProRule" id="PRU10052"/>
    </source>
</evidence>
<evidence type="ECO:0000305" key="5"/>
<dbReference type="EC" id="3.2.1.67"/>
<dbReference type="EMBL" id="X72292">
    <property type="protein sequence ID" value="CAA51033.1"/>
    <property type="molecule type" value="mRNA"/>
</dbReference>
<dbReference type="EMBL" id="AC013483">
    <property type="protein sequence ID" value="AAF21195.1"/>
    <property type="molecule type" value="Genomic_DNA"/>
</dbReference>
<dbReference type="EMBL" id="CP002686">
    <property type="protein sequence ID" value="AEE74611.1"/>
    <property type="molecule type" value="Genomic_DNA"/>
</dbReference>
<dbReference type="EMBL" id="AY056173">
    <property type="protein sequence ID" value="AAL07022.1"/>
    <property type="molecule type" value="mRNA"/>
</dbReference>
<dbReference type="EMBL" id="AY091200">
    <property type="protein sequence ID" value="AAM14139.1"/>
    <property type="molecule type" value="mRNA"/>
</dbReference>
<dbReference type="PIR" id="S34200">
    <property type="entry name" value="S34200"/>
</dbReference>
<dbReference type="RefSeq" id="NP_187442.1">
    <property type="nucleotide sequence ID" value="NM_111664.3"/>
</dbReference>
<dbReference type="SMR" id="P49063"/>
<dbReference type="FunCoup" id="P49063">
    <property type="interactions" value="134"/>
</dbReference>
<dbReference type="STRING" id="3702.P49063"/>
<dbReference type="CAZy" id="GH28">
    <property type="family name" value="Glycoside Hydrolase Family 28"/>
</dbReference>
<dbReference type="GlyGen" id="P49063">
    <property type="glycosylation" value="2 sites"/>
</dbReference>
<dbReference type="iPTMnet" id="P49063"/>
<dbReference type="PaxDb" id="3702-AT3G07850.1"/>
<dbReference type="ProteomicsDB" id="235103"/>
<dbReference type="EnsemblPlants" id="AT3G07850.1">
    <property type="protein sequence ID" value="AT3G07850.1"/>
    <property type="gene ID" value="AT3G07850"/>
</dbReference>
<dbReference type="GeneID" id="819976"/>
<dbReference type="Gramene" id="AT3G07850.1">
    <property type="protein sequence ID" value="AT3G07850.1"/>
    <property type="gene ID" value="AT3G07850"/>
</dbReference>
<dbReference type="KEGG" id="ath:AT3G07850"/>
<dbReference type="Araport" id="AT3G07850"/>
<dbReference type="TAIR" id="AT3G07850"/>
<dbReference type="eggNOG" id="ENOG502QTAW">
    <property type="taxonomic scope" value="Eukaryota"/>
</dbReference>
<dbReference type="HOGENOM" id="CLU_016031_2_2_1"/>
<dbReference type="InParanoid" id="P49063"/>
<dbReference type="OMA" id="WNKCKID"/>
<dbReference type="PhylomeDB" id="P49063"/>
<dbReference type="BioCyc" id="ARA:AT3G07850-MONOMER"/>
<dbReference type="PRO" id="PR:P49063"/>
<dbReference type="Proteomes" id="UP000006548">
    <property type="component" value="Chromosome 3"/>
</dbReference>
<dbReference type="ExpressionAtlas" id="P49063">
    <property type="expression patterns" value="baseline and differential"/>
</dbReference>
<dbReference type="GO" id="GO:0005576">
    <property type="term" value="C:extracellular region"/>
    <property type="evidence" value="ECO:0007669"/>
    <property type="project" value="UniProtKB-SubCell"/>
</dbReference>
<dbReference type="GO" id="GO:0047911">
    <property type="term" value="F:galacturan 1,4-alpha-galacturonidase activity"/>
    <property type="evidence" value="ECO:0007669"/>
    <property type="project" value="UniProtKB-EC"/>
</dbReference>
<dbReference type="GO" id="GO:0004650">
    <property type="term" value="F:polygalacturonase activity"/>
    <property type="evidence" value="ECO:0007669"/>
    <property type="project" value="InterPro"/>
</dbReference>
<dbReference type="GO" id="GO:0005975">
    <property type="term" value="P:carbohydrate metabolic process"/>
    <property type="evidence" value="ECO:0007669"/>
    <property type="project" value="InterPro"/>
</dbReference>
<dbReference type="GO" id="GO:0071555">
    <property type="term" value="P:cell wall organization"/>
    <property type="evidence" value="ECO:0007669"/>
    <property type="project" value="UniProtKB-KW"/>
</dbReference>
<dbReference type="FunFam" id="2.160.20.10:FF:000004">
    <property type="entry name" value="Pectin lyase-like superfamily protein"/>
    <property type="match status" value="1"/>
</dbReference>
<dbReference type="Gene3D" id="2.160.20.10">
    <property type="entry name" value="Single-stranded right-handed beta-helix, Pectin lyase-like"/>
    <property type="match status" value="1"/>
</dbReference>
<dbReference type="InterPro" id="IPR000743">
    <property type="entry name" value="Glyco_hydro_28"/>
</dbReference>
<dbReference type="InterPro" id="IPR006626">
    <property type="entry name" value="PbH1"/>
</dbReference>
<dbReference type="InterPro" id="IPR012334">
    <property type="entry name" value="Pectin_lyas_fold"/>
</dbReference>
<dbReference type="InterPro" id="IPR011050">
    <property type="entry name" value="Pectin_lyase_fold/virulence"/>
</dbReference>
<dbReference type="PANTHER" id="PTHR31375">
    <property type="match status" value="1"/>
</dbReference>
<dbReference type="Pfam" id="PF00295">
    <property type="entry name" value="Glyco_hydro_28"/>
    <property type="match status" value="1"/>
</dbReference>
<dbReference type="SMART" id="SM00710">
    <property type="entry name" value="PbH1"/>
    <property type="match status" value="5"/>
</dbReference>
<dbReference type="SUPFAM" id="SSF51126">
    <property type="entry name" value="Pectin lyase-like"/>
    <property type="match status" value="1"/>
</dbReference>
<dbReference type="PROSITE" id="PS00502">
    <property type="entry name" value="POLYGALACTURONASE"/>
    <property type="match status" value="1"/>
</dbReference>